<name>CCL11_HUMLU</name>
<accession>M4ISH2</accession>
<sequence>MEELKPRFANSCPLTPLGFLERAATVYGDCISVVYDDLSYTWSQTHTRCLRVASCIESCLGVKKGQVVSVVAPNVPAMYELNFAVPMAGVVLNNINTRLNAVTISVMLRHSESKLVFVDQLSVRLVLDAVSLFPKNTPTPLLVLIADNITGENLTVEDREHFVCCYEDLVEKGDDKTFKWVRPISEWDPIVLNYTSGTTSSPKGVVHSHRSVFVVTLDSLIDWGVPKQPVYLWTLPMFHANGWGYTWGIAAVGGTNICLRRFDGEIIFNLIRRHRVTHMCAAPIVLNMLSNSPNAEPLPNPVHVMTGGAPPPAAVLLRTESLGFVISHGYGMTEMLGVVVSCAWKREWNRLPATEQARLKSRQGVRTAAMMEVDVVDPNSGVSVKRDGLTMGEIVLKGSSIMLGYLKNSAATAKCIRADGWFYTGDMAVMHPDGYLEIKDRSKDVIISGGENVSSVEVESALYSHPAVDEAAVVACPDEYWGETPFAFVTLKKGMRVRPTEKEILEYCREKLAHFMVPKVVVFRDKLPKTSTGKIQKFTLKEIVKTMGYSSSSSSYGVGRARM</sequence>
<feature type="chain" id="PRO_0000452956" description="Probable CoA ligase CCL11">
    <location>
        <begin position="1"/>
        <end position="563"/>
    </location>
</feature>
<feature type="region of interest" description="SBD1" evidence="2">
    <location>
        <begin position="263"/>
        <end position="328"/>
    </location>
</feature>
<feature type="region of interest" description="SBD2" evidence="2">
    <location>
        <begin position="329"/>
        <end position="405"/>
    </location>
</feature>
<feature type="binding site" evidence="3">
    <location>
        <begin position="195"/>
        <end position="203"/>
    </location>
    <ligand>
        <name>ATP</name>
        <dbReference type="ChEBI" id="CHEBI:30616"/>
    </ligand>
</feature>
<feature type="binding site" evidence="3">
    <location>
        <begin position="328"/>
        <end position="333"/>
    </location>
    <ligand>
        <name>ATP</name>
        <dbReference type="ChEBI" id="CHEBI:30616"/>
    </ligand>
</feature>
<feature type="binding site" evidence="3">
    <location>
        <position position="426"/>
    </location>
    <ligand>
        <name>ATP</name>
        <dbReference type="ChEBI" id="CHEBI:30616"/>
    </ligand>
</feature>
<feature type="binding site" evidence="3">
    <location>
        <begin position="438"/>
        <end position="441"/>
    </location>
    <ligand>
        <name>ATP</name>
        <dbReference type="ChEBI" id="CHEBI:30616"/>
    </ligand>
</feature>
<feature type="binding site" evidence="3">
    <location>
        <position position="534"/>
    </location>
    <ligand>
        <name>ATP</name>
        <dbReference type="ChEBI" id="CHEBI:30616"/>
    </ligand>
</feature>
<comment type="subcellular location">
    <subcellularLocation>
        <location evidence="1">Cytoplasm</location>
        <location evidence="1">Cytosol</location>
    </subcellularLocation>
</comment>
<comment type="domain">
    <text evidence="2">Both substrate-binding domains (SBD1 and SBD2) are involved in the substrate recognition, and are sufficient to confer the substrate specificity.</text>
</comment>
<comment type="similarity">
    <text evidence="5">Belongs to the ATP-dependent AMP-binding enzyme family.</text>
</comment>
<organism>
    <name type="scientific">Humulus lupulus</name>
    <name type="common">European hop</name>
    <dbReference type="NCBI Taxonomy" id="3486"/>
    <lineage>
        <taxon>Eukaryota</taxon>
        <taxon>Viridiplantae</taxon>
        <taxon>Streptophyta</taxon>
        <taxon>Embryophyta</taxon>
        <taxon>Tracheophyta</taxon>
        <taxon>Spermatophyta</taxon>
        <taxon>Magnoliopsida</taxon>
        <taxon>eudicotyledons</taxon>
        <taxon>Gunneridae</taxon>
        <taxon>Pentapetalae</taxon>
        <taxon>rosids</taxon>
        <taxon>fabids</taxon>
        <taxon>Rosales</taxon>
        <taxon>Cannabaceae</taxon>
        <taxon>Humulus</taxon>
    </lineage>
</organism>
<dbReference type="EC" id="6.2.1.-" evidence="6"/>
<dbReference type="EMBL" id="JQ740213">
    <property type="protein sequence ID" value="AGA17928.1"/>
    <property type="molecule type" value="mRNA"/>
</dbReference>
<dbReference type="SMR" id="M4ISH2"/>
<dbReference type="GO" id="GO:0005829">
    <property type="term" value="C:cytosol"/>
    <property type="evidence" value="ECO:0000250"/>
    <property type="project" value="UniProtKB"/>
</dbReference>
<dbReference type="GO" id="GO:0005524">
    <property type="term" value="F:ATP binding"/>
    <property type="evidence" value="ECO:0007669"/>
    <property type="project" value="UniProtKB-KW"/>
</dbReference>
<dbReference type="GO" id="GO:0016405">
    <property type="term" value="F:CoA-ligase activity"/>
    <property type="evidence" value="ECO:0000250"/>
    <property type="project" value="UniProtKB"/>
</dbReference>
<dbReference type="CDD" id="cd12118">
    <property type="entry name" value="ttLC_FACS_AEE21_like"/>
    <property type="match status" value="1"/>
</dbReference>
<dbReference type="FunFam" id="3.30.300.30:FF:000008">
    <property type="entry name" value="2,3-dihydroxybenzoate-AMP ligase"/>
    <property type="match status" value="1"/>
</dbReference>
<dbReference type="FunFam" id="3.40.50.12780:FF:000003">
    <property type="entry name" value="Long-chain-fatty-acid--CoA ligase FadD"/>
    <property type="match status" value="1"/>
</dbReference>
<dbReference type="Gene3D" id="3.30.300.30">
    <property type="match status" value="1"/>
</dbReference>
<dbReference type="Gene3D" id="3.40.50.12780">
    <property type="entry name" value="N-terminal domain of ligase-like"/>
    <property type="match status" value="1"/>
</dbReference>
<dbReference type="InterPro" id="IPR025110">
    <property type="entry name" value="AMP-bd_C"/>
</dbReference>
<dbReference type="InterPro" id="IPR045851">
    <property type="entry name" value="AMP-bd_C_sf"/>
</dbReference>
<dbReference type="InterPro" id="IPR020845">
    <property type="entry name" value="AMP-binding_CS"/>
</dbReference>
<dbReference type="InterPro" id="IPR000873">
    <property type="entry name" value="AMP-dep_synth/lig_dom"/>
</dbReference>
<dbReference type="InterPro" id="IPR042099">
    <property type="entry name" value="ANL_N_sf"/>
</dbReference>
<dbReference type="NCBIfam" id="NF006020">
    <property type="entry name" value="PRK08162.1"/>
    <property type="match status" value="1"/>
</dbReference>
<dbReference type="PANTHER" id="PTHR43859">
    <property type="entry name" value="ACYL-ACTIVATING ENZYME"/>
    <property type="match status" value="1"/>
</dbReference>
<dbReference type="PANTHER" id="PTHR43859:SF26">
    <property type="entry name" value="AMP-DEPENDENT SYNTHETASE_LIGASE, AMP-BINDING ENZYME DOMAIN-CONTAINING PROTEIN"/>
    <property type="match status" value="1"/>
</dbReference>
<dbReference type="Pfam" id="PF00501">
    <property type="entry name" value="AMP-binding"/>
    <property type="match status" value="1"/>
</dbReference>
<dbReference type="Pfam" id="PF13193">
    <property type="entry name" value="AMP-binding_C"/>
    <property type="match status" value="1"/>
</dbReference>
<dbReference type="SUPFAM" id="SSF56801">
    <property type="entry name" value="Acetyl-CoA synthetase-like"/>
    <property type="match status" value="1"/>
</dbReference>
<dbReference type="PROSITE" id="PS00455">
    <property type="entry name" value="AMP_BINDING"/>
    <property type="match status" value="1"/>
</dbReference>
<evidence type="ECO:0000250" key="1">
    <source>
        <dbReference type="UniProtKB" id="M4IRL4"/>
    </source>
</evidence>
<evidence type="ECO:0000250" key="2">
    <source>
        <dbReference type="UniProtKB" id="Q42524"/>
    </source>
</evidence>
<evidence type="ECO:0000250" key="3">
    <source>
        <dbReference type="UniProtKB" id="Q81G39"/>
    </source>
</evidence>
<evidence type="ECO:0000303" key="4">
    <source>
    </source>
</evidence>
<evidence type="ECO:0000305" key="5"/>
<evidence type="ECO:0000305" key="6">
    <source>
    </source>
</evidence>
<proteinExistence type="evidence at transcript level"/>
<gene>
    <name evidence="4" type="primary">CCL11</name>
</gene>
<protein>
    <recommendedName>
        <fullName evidence="6">Probable CoA ligase CCL11</fullName>
        <shortName evidence="4">HlCCL11</shortName>
        <ecNumber evidence="6">6.2.1.-</ecNumber>
    </recommendedName>
</protein>
<reference key="1">
    <citation type="journal article" date="2013" name="Mol. Plant">
        <title>Characterization of the formation of branched short-chain fatty acid:CoAs for bitter acid biosynthesis in hop glandular trichomes.</title>
        <authorList>
            <person name="Xu H."/>
            <person name="Zhang F."/>
            <person name="Liu B."/>
            <person name="Huhman D.V."/>
            <person name="Sumner L.W."/>
            <person name="Dixon R.A."/>
            <person name="Wang G."/>
        </authorList>
    </citation>
    <scope>NUCLEOTIDE SEQUENCE [MRNA]</scope>
    <scope>GENE FAMILY</scope>
    <scope>NOMENCLATURE</scope>
    <source>
        <strain>cv. Nugget</strain>
    </source>
</reference>
<keyword id="KW-0067">ATP-binding</keyword>
<keyword id="KW-0963">Cytoplasm</keyword>
<keyword id="KW-0436">Ligase</keyword>
<keyword id="KW-0547">Nucleotide-binding</keyword>